<comment type="function">
    <text evidence="1">Cell division protein that is required for growth during stress conditions. May be involved in protecting or stabilizing the divisomal assembly under conditions of stress.</text>
</comment>
<comment type="subcellular location">
    <subcellularLocation>
        <location evidence="1">Periplasm</location>
    </subcellularLocation>
    <text evidence="1">Localizes to the division septum.</text>
</comment>
<comment type="PTM">
    <text>Predicted to be exported by the Tat system. The position of the signal peptide cleavage has not been experimentally proven.</text>
</comment>
<comment type="similarity">
    <text evidence="1">Belongs to the FtsP family.</text>
</comment>
<accession>D3VCR0</accession>
<name>FTSP_XENNA</name>
<dbReference type="EMBL" id="FN667742">
    <property type="protein sequence ID" value="CBJ92095.1"/>
    <property type="molecule type" value="Genomic_DNA"/>
</dbReference>
<dbReference type="RefSeq" id="WP_010847814.1">
    <property type="nucleotide sequence ID" value="NC_014228.1"/>
</dbReference>
<dbReference type="SMR" id="D3VCR0"/>
<dbReference type="STRING" id="406817.XNC1_4070"/>
<dbReference type="GeneID" id="24904575"/>
<dbReference type="KEGG" id="xne:XNC1_4070"/>
<dbReference type="eggNOG" id="COG2132">
    <property type="taxonomic scope" value="Bacteria"/>
</dbReference>
<dbReference type="HOGENOM" id="CLU_009100_2_4_6"/>
<dbReference type="Proteomes" id="UP000008075">
    <property type="component" value="Chromosome"/>
</dbReference>
<dbReference type="GO" id="GO:0032153">
    <property type="term" value="C:cell division site"/>
    <property type="evidence" value="ECO:0007669"/>
    <property type="project" value="UniProtKB-UniRule"/>
</dbReference>
<dbReference type="GO" id="GO:0030288">
    <property type="term" value="C:outer membrane-bounded periplasmic space"/>
    <property type="evidence" value="ECO:0007669"/>
    <property type="project" value="UniProtKB-UniRule"/>
</dbReference>
<dbReference type="GO" id="GO:0005507">
    <property type="term" value="F:copper ion binding"/>
    <property type="evidence" value="ECO:0007669"/>
    <property type="project" value="InterPro"/>
</dbReference>
<dbReference type="GO" id="GO:0016491">
    <property type="term" value="F:oxidoreductase activity"/>
    <property type="evidence" value="ECO:0007669"/>
    <property type="project" value="InterPro"/>
</dbReference>
<dbReference type="GO" id="GO:0043093">
    <property type="term" value="P:FtsZ-dependent cytokinesis"/>
    <property type="evidence" value="ECO:0007669"/>
    <property type="project" value="UniProtKB-UniRule"/>
</dbReference>
<dbReference type="CDD" id="cd13867">
    <property type="entry name" value="CuRO_2_CueO_FtsP"/>
    <property type="match status" value="1"/>
</dbReference>
<dbReference type="Gene3D" id="2.60.40.420">
    <property type="entry name" value="Cupredoxins - blue copper proteins"/>
    <property type="match status" value="3"/>
</dbReference>
<dbReference type="HAMAP" id="MF_00915">
    <property type="entry name" value="FtsP"/>
    <property type="match status" value="1"/>
</dbReference>
<dbReference type="InterPro" id="IPR011707">
    <property type="entry name" value="Cu-oxidase-like_N"/>
</dbReference>
<dbReference type="InterPro" id="IPR011706">
    <property type="entry name" value="Cu-oxidase_C"/>
</dbReference>
<dbReference type="InterPro" id="IPR045087">
    <property type="entry name" value="Cu-oxidase_fam"/>
</dbReference>
<dbReference type="InterPro" id="IPR008972">
    <property type="entry name" value="Cupredoxin"/>
</dbReference>
<dbReference type="InterPro" id="IPR026589">
    <property type="entry name" value="FtsP"/>
</dbReference>
<dbReference type="InterPro" id="IPR006311">
    <property type="entry name" value="TAT_signal"/>
</dbReference>
<dbReference type="NCBIfam" id="NF008135">
    <property type="entry name" value="PRK10883.1"/>
    <property type="match status" value="1"/>
</dbReference>
<dbReference type="PANTHER" id="PTHR48267:SF1">
    <property type="entry name" value="BILIRUBIN OXIDASE"/>
    <property type="match status" value="1"/>
</dbReference>
<dbReference type="PANTHER" id="PTHR48267">
    <property type="entry name" value="CUPREDOXIN SUPERFAMILY PROTEIN"/>
    <property type="match status" value="1"/>
</dbReference>
<dbReference type="Pfam" id="PF07731">
    <property type="entry name" value="Cu-oxidase_2"/>
    <property type="match status" value="1"/>
</dbReference>
<dbReference type="Pfam" id="PF07732">
    <property type="entry name" value="Cu-oxidase_3"/>
    <property type="match status" value="1"/>
</dbReference>
<dbReference type="SUPFAM" id="SSF49503">
    <property type="entry name" value="Cupredoxins"/>
    <property type="match status" value="3"/>
</dbReference>
<dbReference type="PROSITE" id="PS51318">
    <property type="entry name" value="TAT"/>
    <property type="match status" value="1"/>
</dbReference>
<proteinExistence type="inferred from homology"/>
<organism>
    <name type="scientific">Xenorhabdus nematophila (strain ATCC 19061 / DSM 3370 / CCUG 14189 / LMG 1036 / NCIMB 9965 / AN6)</name>
    <dbReference type="NCBI Taxonomy" id="406817"/>
    <lineage>
        <taxon>Bacteria</taxon>
        <taxon>Pseudomonadati</taxon>
        <taxon>Pseudomonadota</taxon>
        <taxon>Gammaproteobacteria</taxon>
        <taxon>Enterobacterales</taxon>
        <taxon>Morganellaceae</taxon>
        <taxon>Xenorhabdus</taxon>
    </lineage>
</organism>
<reference key="1">
    <citation type="journal article" date="2011" name="PLoS ONE">
        <title>The entomopathogenic bacterial endosymbionts xenorhabdus and photorhabdus: convergent lifestyles from divergent genomes.</title>
        <authorList>
            <person name="Chaston J.M."/>
            <person name="Suen G."/>
            <person name="Tucker S.L."/>
            <person name="Andersen A.W."/>
            <person name="Bhasin A."/>
            <person name="Bode E."/>
            <person name="Bode H.B."/>
            <person name="Brachmann A.O."/>
            <person name="Cowles C.E."/>
            <person name="Cowles K.N."/>
            <person name="Darby C."/>
            <person name="de Leon L."/>
            <person name="Drace K."/>
            <person name="Du Z."/>
            <person name="Givaudan A."/>
            <person name="Herbert Tran E.E."/>
            <person name="Jewell K.A."/>
            <person name="Knack J.J."/>
            <person name="Krasomil-Osterfeld K.C."/>
            <person name="Kukor R."/>
            <person name="Lanois A."/>
            <person name="Latreille P."/>
            <person name="Leimgruber N.K."/>
            <person name="Lipke C.M."/>
            <person name="Liu R."/>
            <person name="Lu X."/>
            <person name="Martens E.C."/>
            <person name="Marri P.R."/>
            <person name="Medigue C."/>
            <person name="Menard M.L."/>
            <person name="Miller N.M."/>
            <person name="Morales-Soto N."/>
            <person name="Norton S."/>
            <person name="Ogier J.C."/>
            <person name="Orchard S.S."/>
            <person name="Park D."/>
            <person name="Park Y."/>
            <person name="Qurollo B.A."/>
            <person name="Sugar D.R."/>
            <person name="Richards G.R."/>
            <person name="Rouy Z."/>
            <person name="Slominski B."/>
            <person name="Slominski K."/>
            <person name="Snyder H."/>
            <person name="Tjaden B.C."/>
            <person name="van der Hoeven R."/>
            <person name="Welch R.D."/>
            <person name="Wheeler C."/>
            <person name="Xiang B."/>
            <person name="Barbazuk B."/>
            <person name="Gaudriault S."/>
            <person name="Goodner B."/>
            <person name="Slater S.C."/>
            <person name="Forst S."/>
            <person name="Goldman B.S."/>
            <person name="Goodrich-Blair H."/>
        </authorList>
    </citation>
    <scope>NUCLEOTIDE SEQUENCE [LARGE SCALE GENOMIC DNA]</scope>
    <source>
        <strain>ATCC 19061 / DSM 3370 / CCUG 14189 / LMG 1036 / NCIMB 9965 / AN6</strain>
    </source>
</reference>
<sequence>MSLSRRQFIQASGLAMCLGALPFAVQANKSQPTKLPLPPLLESRGGQPLFLAIQKARWSFNGQNKVQVWGINGHYLGPTIRVHRGDDVKLIYSNRLSEDVAMTVGGLLLPGTLMGGSTRLMSPGESWSPVIPINQPAATCWYHANTPNRTAQHVYAGLAGMCLVEDEDSRRLPLPKHYGVDDFPVILQDKRLDNFGVPQYDPPANQGFLGDTLIVNGVENPFVEVARGWVRLRLLNASNARRYQLQLSDGRPFYMIGTDQGLLPAPVAVQQLPLAPGERREVLVDMSKVENVSITAGESASVMDRLKGLFEPSTKLVSTTVLTLKASGLLPLVTDQLPNQLVGDNPQISSSIRSRQLTLGDYSQGINSSILNESRIDITSQQGAWERWIITTSVPQPFHIEGVRFKVISFNGNRPEPQDYGWKDTVWIDERAELLVNMMQPSYAHFPFMYYSQILEMVDRGVAGQLVVNPAGF</sequence>
<evidence type="ECO:0000255" key="1">
    <source>
        <dbReference type="HAMAP-Rule" id="MF_00915"/>
    </source>
</evidence>
<gene>
    <name evidence="1" type="primary">ftsP</name>
    <name type="ordered locus">XNC1_4070</name>
</gene>
<feature type="signal peptide" description="Tat-type signal" evidence="1">
    <location>
        <begin position="1"/>
        <end position="27"/>
    </location>
</feature>
<feature type="chain" id="PRO_0000416016" description="Cell division protein FtsP">
    <location>
        <begin position="28"/>
        <end position="473"/>
    </location>
</feature>
<keyword id="KW-0131">Cell cycle</keyword>
<keyword id="KW-0132">Cell division</keyword>
<keyword id="KW-0574">Periplasm</keyword>
<keyword id="KW-1185">Reference proteome</keyword>
<keyword id="KW-0732">Signal</keyword>
<protein>
    <recommendedName>
        <fullName evidence="1">Cell division protein FtsP</fullName>
    </recommendedName>
</protein>